<dbReference type="EMBL" id="CP000413">
    <property type="protein sequence ID" value="ABJ60309.1"/>
    <property type="molecule type" value="Genomic_DNA"/>
</dbReference>
<dbReference type="RefSeq" id="WP_003647371.1">
    <property type="nucleotide sequence ID" value="NZ_WBMG01000014.1"/>
</dbReference>
<dbReference type="SMR" id="Q043R3"/>
<dbReference type="GeneID" id="29639501"/>
<dbReference type="KEGG" id="lga:LGAS_0920"/>
<dbReference type="HOGENOM" id="CLU_033123_0_0_9"/>
<dbReference type="BioCyc" id="LGAS324831:G1G6Y-914-MONOMER"/>
<dbReference type="Proteomes" id="UP000000664">
    <property type="component" value="Chromosome"/>
</dbReference>
<dbReference type="GO" id="GO:0009376">
    <property type="term" value="C:HslUV protease complex"/>
    <property type="evidence" value="ECO:0007669"/>
    <property type="project" value="UniProtKB-UniRule"/>
</dbReference>
<dbReference type="GO" id="GO:0005524">
    <property type="term" value="F:ATP binding"/>
    <property type="evidence" value="ECO:0007669"/>
    <property type="project" value="UniProtKB-UniRule"/>
</dbReference>
<dbReference type="GO" id="GO:0016887">
    <property type="term" value="F:ATP hydrolysis activity"/>
    <property type="evidence" value="ECO:0007669"/>
    <property type="project" value="InterPro"/>
</dbReference>
<dbReference type="GO" id="GO:0008233">
    <property type="term" value="F:peptidase activity"/>
    <property type="evidence" value="ECO:0007669"/>
    <property type="project" value="InterPro"/>
</dbReference>
<dbReference type="GO" id="GO:0036402">
    <property type="term" value="F:proteasome-activating activity"/>
    <property type="evidence" value="ECO:0007669"/>
    <property type="project" value="UniProtKB-UniRule"/>
</dbReference>
<dbReference type="GO" id="GO:0043335">
    <property type="term" value="P:protein unfolding"/>
    <property type="evidence" value="ECO:0007669"/>
    <property type="project" value="UniProtKB-UniRule"/>
</dbReference>
<dbReference type="GO" id="GO:0051603">
    <property type="term" value="P:proteolysis involved in protein catabolic process"/>
    <property type="evidence" value="ECO:0007669"/>
    <property type="project" value="TreeGrafter"/>
</dbReference>
<dbReference type="CDD" id="cd19498">
    <property type="entry name" value="RecA-like_HslU"/>
    <property type="match status" value="1"/>
</dbReference>
<dbReference type="Gene3D" id="1.10.8.60">
    <property type="match status" value="1"/>
</dbReference>
<dbReference type="Gene3D" id="1.10.8.10">
    <property type="entry name" value="DNA helicase RuvA subunit, C-terminal domain"/>
    <property type="match status" value="1"/>
</dbReference>
<dbReference type="Gene3D" id="3.40.50.300">
    <property type="entry name" value="P-loop containing nucleotide triphosphate hydrolases"/>
    <property type="match status" value="2"/>
</dbReference>
<dbReference type="HAMAP" id="MF_00249">
    <property type="entry name" value="HslU"/>
    <property type="match status" value="1"/>
</dbReference>
<dbReference type="InterPro" id="IPR003593">
    <property type="entry name" value="AAA+_ATPase"/>
</dbReference>
<dbReference type="InterPro" id="IPR050052">
    <property type="entry name" value="ATP-dep_Clp_protease_ClpX"/>
</dbReference>
<dbReference type="InterPro" id="IPR003959">
    <property type="entry name" value="ATPase_AAA_core"/>
</dbReference>
<dbReference type="InterPro" id="IPR019489">
    <property type="entry name" value="Clp_ATPase_C"/>
</dbReference>
<dbReference type="InterPro" id="IPR004491">
    <property type="entry name" value="HslU"/>
</dbReference>
<dbReference type="InterPro" id="IPR027417">
    <property type="entry name" value="P-loop_NTPase"/>
</dbReference>
<dbReference type="NCBIfam" id="TIGR00390">
    <property type="entry name" value="hslU"/>
    <property type="match status" value="1"/>
</dbReference>
<dbReference type="NCBIfam" id="NF003544">
    <property type="entry name" value="PRK05201.1"/>
    <property type="match status" value="1"/>
</dbReference>
<dbReference type="PANTHER" id="PTHR48102">
    <property type="entry name" value="ATP-DEPENDENT CLP PROTEASE ATP-BINDING SUBUNIT CLPX-LIKE, MITOCHONDRIAL-RELATED"/>
    <property type="match status" value="1"/>
</dbReference>
<dbReference type="PANTHER" id="PTHR48102:SF3">
    <property type="entry name" value="ATP-DEPENDENT PROTEASE ATPASE SUBUNIT HSLU"/>
    <property type="match status" value="1"/>
</dbReference>
<dbReference type="Pfam" id="PF00004">
    <property type="entry name" value="AAA"/>
    <property type="match status" value="1"/>
</dbReference>
<dbReference type="Pfam" id="PF07724">
    <property type="entry name" value="AAA_2"/>
    <property type="match status" value="1"/>
</dbReference>
<dbReference type="Pfam" id="PF10431">
    <property type="entry name" value="ClpB_D2-small"/>
    <property type="match status" value="1"/>
</dbReference>
<dbReference type="SMART" id="SM00382">
    <property type="entry name" value="AAA"/>
    <property type="match status" value="1"/>
</dbReference>
<dbReference type="SMART" id="SM01086">
    <property type="entry name" value="ClpB_D2-small"/>
    <property type="match status" value="1"/>
</dbReference>
<dbReference type="SUPFAM" id="SSF52540">
    <property type="entry name" value="P-loop containing nucleoside triphosphate hydrolases"/>
    <property type="match status" value="1"/>
</dbReference>
<comment type="function">
    <text evidence="1">ATPase subunit of a proteasome-like degradation complex; this subunit has chaperone activity. The binding of ATP and its subsequent hydrolysis by HslU are essential for unfolding of protein substrates subsequently hydrolyzed by HslV. HslU recognizes the N-terminal part of its protein substrates and unfolds these before they are guided to HslV for hydrolysis.</text>
</comment>
<comment type="subunit">
    <text evidence="1">A double ring-shaped homohexamer of HslV is capped on each side by a ring-shaped HslU homohexamer. The assembly of the HslU/HslV complex is dependent on binding of ATP.</text>
</comment>
<comment type="subcellular location">
    <subcellularLocation>
        <location evidence="1">Cytoplasm</location>
    </subcellularLocation>
</comment>
<comment type="similarity">
    <text evidence="1">Belongs to the ClpX chaperone family. HslU subfamily.</text>
</comment>
<accession>Q043R3</accession>
<reference key="1">
    <citation type="journal article" date="2006" name="Proc. Natl. Acad. Sci. U.S.A.">
        <title>Comparative genomics of the lactic acid bacteria.</title>
        <authorList>
            <person name="Makarova K.S."/>
            <person name="Slesarev A."/>
            <person name="Wolf Y.I."/>
            <person name="Sorokin A."/>
            <person name="Mirkin B."/>
            <person name="Koonin E.V."/>
            <person name="Pavlov A."/>
            <person name="Pavlova N."/>
            <person name="Karamychev V."/>
            <person name="Polouchine N."/>
            <person name="Shakhova V."/>
            <person name="Grigoriev I."/>
            <person name="Lou Y."/>
            <person name="Rohksar D."/>
            <person name="Lucas S."/>
            <person name="Huang K."/>
            <person name="Goodstein D.M."/>
            <person name="Hawkins T."/>
            <person name="Plengvidhya V."/>
            <person name="Welker D."/>
            <person name="Hughes J."/>
            <person name="Goh Y."/>
            <person name="Benson A."/>
            <person name="Baldwin K."/>
            <person name="Lee J.-H."/>
            <person name="Diaz-Muniz I."/>
            <person name="Dosti B."/>
            <person name="Smeianov V."/>
            <person name="Wechter W."/>
            <person name="Barabote R."/>
            <person name="Lorca G."/>
            <person name="Altermann E."/>
            <person name="Barrangou R."/>
            <person name="Ganesan B."/>
            <person name="Xie Y."/>
            <person name="Rawsthorne H."/>
            <person name="Tamir D."/>
            <person name="Parker C."/>
            <person name="Breidt F."/>
            <person name="Broadbent J.R."/>
            <person name="Hutkins R."/>
            <person name="O'Sullivan D."/>
            <person name="Steele J."/>
            <person name="Unlu G."/>
            <person name="Saier M.H. Jr."/>
            <person name="Klaenhammer T."/>
            <person name="Richardson P."/>
            <person name="Kozyavkin S."/>
            <person name="Weimer B.C."/>
            <person name="Mills D.A."/>
        </authorList>
    </citation>
    <scope>NUCLEOTIDE SEQUENCE [LARGE SCALE GENOMIC DNA]</scope>
    <source>
        <strain>ATCC 33323 / DSM 20243 / BCRC 14619 / CIP 102991 / JCM 1131 / KCTC 3163 / NCIMB 11718 / NCTC 13722 / AM63</strain>
    </source>
</reference>
<keyword id="KW-0067">ATP-binding</keyword>
<keyword id="KW-0143">Chaperone</keyword>
<keyword id="KW-0963">Cytoplasm</keyword>
<keyword id="KW-0547">Nucleotide-binding</keyword>
<evidence type="ECO:0000255" key="1">
    <source>
        <dbReference type="HAMAP-Rule" id="MF_00249"/>
    </source>
</evidence>
<organism>
    <name type="scientific">Lactobacillus gasseri (strain ATCC 33323 / DSM 20243 / BCRC 14619 / CIP 102991 / JCM 1131 / KCTC 3163 / NCIMB 11718 / NCTC 13722 / AM63)</name>
    <dbReference type="NCBI Taxonomy" id="324831"/>
    <lineage>
        <taxon>Bacteria</taxon>
        <taxon>Bacillati</taxon>
        <taxon>Bacillota</taxon>
        <taxon>Bacilli</taxon>
        <taxon>Lactobacillales</taxon>
        <taxon>Lactobacillaceae</taxon>
        <taxon>Lactobacillus</taxon>
    </lineage>
</organism>
<protein>
    <recommendedName>
        <fullName evidence="1">ATP-dependent protease ATPase subunit HslU</fullName>
    </recommendedName>
    <alternativeName>
        <fullName evidence="1">Unfoldase HslU</fullName>
    </alternativeName>
</protein>
<proteinExistence type="inferred from homology"/>
<name>HSLU_LACGA</name>
<feature type="chain" id="PRO_1000012755" description="ATP-dependent protease ATPase subunit HslU">
    <location>
        <begin position="1"/>
        <end position="464"/>
    </location>
</feature>
<feature type="binding site" evidence="1">
    <location>
        <position position="19"/>
    </location>
    <ligand>
        <name>ATP</name>
        <dbReference type="ChEBI" id="CHEBI:30616"/>
    </ligand>
</feature>
<feature type="binding site" evidence="1">
    <location>
        <begin position="61"/>
        <end position="66"/>
    </location>
    <ligand>
        <name>ATP</name>
        <dbReference type="ChEBI" id="CHEBI:30616"/>
    </ligand>
</feature>
<feature type="binding site" evidence="1">
    <location>
        <position position="277"/>
    </location>
    <ligand>
        <name>ATP</name>
        <dbReference type="ChEBI" id="CHEBI:30616"/>
    </ligand>
</feature>
<feature type="binding site" evidence="1">
    <location>
        <position position="342"/>
    </location>
    <ligand>
        <name>ATP</name>
        <dbReference type="ChEBI" id="CHEBI:30616"/>
    </ligand>
</feature>
<feature type="binding site" evidence="1">
    <location>
        <position position="414"/>
    </location>
    <ligand>
        <name>ATP</name>
        <dbReference type="ChEBI" id="CHEBI:30616"/>
    </ligand>
</feature>
<sequence length="464" mass="52481">MTEEKTPKQIVELLDKYIIGQNEAKKSVAVALYNRYRRLQLPKQMQQDITPKNMLMAGPTGVGKTEIARRLAKIVDAPFVKVEATKFTEVGYVGRDVESMVRDLVEEAVRMEEKEQFDRVKLQATKKANNRLVKLIVPGIKRENRENSMQQMMQMLSGNFNMNQAQDNEEVTDDIRNERLSVADQLNKGLLENREVTIEVEQAPKVNPMGDMMGQMGIDMSSLMGDLMPKKTVKRTLKVSDAREVLIQEESKKLINYDSLYQRAIERTQQNGIIFIDEIDKITAGNKKTSGEVSREGVQRDILPIVEGSTVSTKYGPVSTDHILFIAAGAFAESKPSDLIPELQGRFPIRVELNALTQEDFVKILKDPQNSLLKQYIALLKADGIKLVFTQEAIDRIAQIAFEVNQGTDNIGARRLATILEKLLEDVLYEGPDMNMGEITITQKYVDQKLSDIIINKDLTKFIL</sequence>
<gene>
    <name evidence="1" type="primary">hslU</name>
    <name type="ordered locus">LGAS_0920</name>
</gene>